<proteinExistence type="inferred from homology"/>
<evidence type="ECO:0000255" key="1">
    <source>
        <dbReference type="HAMAP-Rule" id="MF_01237"/>
    </source>
</evidence>
<gene>
    <name evidence="1" type="primary">nanA</name>
    <name type="ordered locus">EcolC_0481</name>
</gene>
<organism>
    <name type="scientific">Escherichia coli (strain ATCC 8739 / DSM 1576 / NBRC 3972 / NCIMB 8545 / WDCM 00012 / Crooks)</name>
    <dbReference type="NCBI Taxonomy" id="481805"/>
    <lineage>
        <taxon>Bacteria</taxon>
        <taxon>Pseudomonadati</taxon>
        <taxon>Pseudomonadota</taxon>
        <taxon>Gammaproteobacteria</taxon>
        <taxon>Enterobacterales</taxon>
        <taxon>Enterobacteriaceae</taxon>
        <taxon>Escherichia</taxon>
    </lineage>
</organism>
<reference key="1">
    <citation type="submission" date="2008-02" db="EMBL/GenBank/DDBJ databases">
        <title>Complete sequence of Escherichia coli C str. ATCC 8739.</title>
        <authorList>
            <person name="Copeland A."/>
            <person name="Lucas S."/>
            <person name="Lapidus A."/>
            <person name="Glavina del Rio T."/>
            <person name="Dalin E."/>
            <person name="Tice H."/>
            <person name="Bruce D."/>
            <person name="Goodwin L."/>
            <person name="Pitluck S."/>
            <person name="Kiss H."/>
            <person name="Brettin T."/>
            <person name="Detter J.C."/>
            <person name="Han C."/>
            <person name="Kuske C.R."/>
            <person name="Schmutz J."/>
            <person name="Larimer F."/>
            <person name="Land M."/>
            <person name="Hauser L."/>
            <person name="Kyrpides N."/>
            <person name="Mikhailova N."/>
            <person name="Ingram L."/>
            <person name="Richardson P."/>
        </authorList>
    </citation>
    <scope>NUCLEOTIDE SEQUENCE [LARGE SCALE GENOMIC DNA]</scope>
    <source>
        <strain>ATCC 8739 / DSM 1576 / NBRC 3972 / NCIMB 8545 / WDCM 00012 / Crooks</strain>
    </source>
</reference>
<name>NANA_ECOLC</name>
<protein>
    <recommendedName>
        <fullName evidence="1">N-acetylneuraminate lyase</fullName>
        <shortName evidence="1">NAL</shortName>
        <shortName evidence="1">Neu5Ac lyase</shortName>
        <ecNumber evidence="1">4.1.3.3</ecNumber>
    </recommendedName>
    <alternativeName>
        <fullName evidence="1">N-acetylneuraminate pyruvate-lyase</fullName>
    </alternativeName>
    <alternativeName>
        <fullName evidence="1">N-acetylneuraminic acid aldolase</fullName>
    </alternativeName>
    <alternativeName>
        <fullName evidence="1">Sialate lyase</fullName>
    </alternativeName>
    <alternativeName>
        <fullName evidence="1">Sialic acid aldolase</fullName>
    </alternativeName>
    <alternativeName>
        <fullName evidence="1">Sialic acid lyase</fullName>
    </alternativeName>
</protein>
<sequence>MATNLRGVMAALLTPFDQQQALDKASLRRLVQFNIQQGIDGLYVGGSTGEAFVQSLSEREQVLEIVAEEAKGKIKLIAHVGCVSTAESQQLAASAKRYGFDAVSAVTPFYYPFSFEEHCDHYRAIIDSADGLPMVVYNIPALSGVKLTLDQINTLVTLPGVGALKQTSGDLYQMEQIRREHPDLVLYNGYDEIFASGLLAGADGGIGSTYNIMGWRYQGIVKALKEGDIQTAQKLQTECNKVIDLLIKTGVFRGLKTVLHYMDVVSVPLCRKPFGPVDEKYLPELKALAQQLMQERG</sequence>
<comment type="function">
    <text evidence="1">Catalyzes the reversible aldol cleavage of N-acetylneuraminic acid (sialic acid; Neu5Ac) to form pyruvate and N-acetylmannosamine (ManNAc) via a Schiff base intermediate.</text>
</comment>
<comment type="catalytic activity">
    <reaction evidence="1">
        <text>aceneuramate = aldehydo-N-acetyl-D-mannosamine + pyruvate</text>
        <dbReference type="Rhea" id="RHEA:23296"/>
        <dbReference type="ChEBI" id="CHEBI:15361"/>
        <dbReference type="ChEBI" id="CHEBI:17122"/>
        <dbReference type="ChEBI" id="CHEBI:173083"/>
        <dbReference type="EC" id="4.1.3.3"/>
    </reaction>
</comment>
<comment type="pathway">
    <text evidence="1">Amino-sugar metabolism; N-acetylneuraminate degradation; D-fructose 6-phosphate from N-acetylneuraminate: step 1/5.</text>
</comment>
<comment type="subunit">
    <text evidence="1">Homotetramer.</text>
</comment>
<comment type="subcellular location">
    <subcellularLocation>
        <location evidence="1">Cytoplasm</location>
    </subcellularLocation>
</comment>
<comment type="similarity">
    <text evidence="1">Belongs to the DapA family. NanA subfamily.</text>
</comment>
<keyword id="KW-0119">Carbohydrate metabolism</keyword>
<keyword id="KW-0963">Cytoplasm</keyword>
<keyword id="KW-0456">Lyase</keyword>
<keyword id="KW-0704">Schiff base</keyword>
<accession>B1IQQ4</accession>
<dbReference type="EC" id="4.1.3.3" evidence="1"/>
<dbReference type="EMBL" id="CP000946">
    <property type="protein sequence ID" value="ACA76158.1"/>
    <property type="molecule type" value="Genomic_DNA"/>
</dbReference>
<dbReference type="RefSeq" id="WP_000224714.1">
    <property type="nucleotide sequence ID" value="NZ_MTFT01000027.1"/>
</dbReference>
<dbReference type="SMR" id="B1IQQ4"/>
<dbReference type="GeneID" id="93778761"/>
<dbReference type="KEGG" id="ecl:EcolC_0481"/>
<dbReference type="HOGENOM" id="CLU_049343_6_0_6"/>
<dbReference type="UniPathway" id="UPA00629">
    <property type="reaction ID" value="UER00680"/>
</dbReference>
<dbReference type="GO" id="GO:0005829">
    <property type="term" value="C:cytosol"/>
    <property type="evidence" value="ECO:0007669"/>
    <property type="project" value="TreeGrafter"/>
</dbReference>
<dbReference type="GO" id="GO:0008747">
    <property type="term" value="F:N-acetylneuraminate lyase activity"/>
    <property type="evidence" value="ECO:0007669"/>
    <property type="project" value="UniProtKB-UniRule"/>
</dbReference>
<dbReference type="GO" id="GO:0005975">
    <property type="term" value="P:carbohydrate metabolic process"/>
    <property type="evidence" value="ECO:0007669"/>
    <property type="project" value="UniProtKB-UniRule"/>
</dbReference>
<dbReference type="GO" id="GO:0019262">
    <property type="term" value="P:N-acetylneuraminate catabolic process"/>
    <property type="evidence" value="ECO:0007669"/>
    <property type="project" value="UniProtKB-UniRule"/>
</dbReference>
<dbReference type="CDD" id="cd00954">
    <property type="entry name" value="NAL"/>
    <property type="match status" value="1"/>
</dbReference>
<dbReference type="FunFam" id="3.20.20.70:FF:000039">
    <property type="entry name" value="N-acetylneuraminate lyase"/>
    <property type="match status" value="1"/>
</dbReference>
<dbReference type="Gene3D" id="3.20.20.70">
    <property type="entry name" value="Aldolase class I"/>
    <property type="match status" value="1"/>
</dbReference>
<dbReference type="HAMAP" id="MF_01237">
    <property type="entry name" value="N_acetylneuram_lyase"/>
    <property type="match status" value="1"/>
</dbReference>
<dbReference type="InterPro" id="IPR013785">
    <property type="entry name" value="Aldolase_TIM"/>
</dbReference>
<dbReference type="InterPro" id="IPR002220">
    <property type="entry name" value="DapA-like"/>
</dbReference>
<dbReference type="InterPro" id="IPR005264">
    <property type="entry name" value="NanA"/>
</dbReference>
<dbReference type="InterPro" id="IPR020625">
    <property type="entry name" value="Schiff_base-form_aldolases_AS"/>
</dbReference>
<dbReference type="InterPro" id="IPR020624">
    <property type="entry name" value="Schiff_base-form_aldolases_CS"/>
</dbReference>
<dbReference type="NCBIfam" id="TIGR00683">
    <property type="entry name" value="nanA"/>
    <property type="match status" value="1"/>
</dbReference>
<dbReference type="NCBIfam" id="NF003164">
    <property type="entry name" value="PRK04147.1"/>
    <property type="match status" value="1"/>
</dbReference>
<dbReference type="PANTHER" id="PTHR42849">
    <property type="entry name" value="N-ACETYLNEURAMINATE LYASE"/>
    <property type="match status" value="1"/>
</dbReference>
<dbReference type="PANTHER" id="PTHR42849:SF1">
    <property type="entry name" value="N-ACETYLNEURAMINATE LYASE"/>
    <property type="match status" value="1"/>
</dbReference>
<dbReference type="Pfam" id="PF00701">
    <property type="entry name" value="DHDPS"/>
    <property type="match status" value="1"/>
</dbReference>
<dbReference type="PIRSF" id="PIRSF001365">
    <property type="entry name" value="DHDPS"/>
    <property type="match status" value="1"/>
</dbReference>
<dbReference type="PRINTS" id="PR00146">
    <property type="entry name" value="DHPICSNTHASE"/>
</dbReference>
<dbReference type="SMART" id="SM01130">
    <property type="entry name" value="DHDPS"/>
    <property type="match status" value="1"/>
</dbReference>
<dbReference type="SUPFAM" id="SSF51569">
    <property type="entry name" value="Aldolase"/>
    <property type="match status" value="1"/>
</dbReference>
<dbReference type="PROSITE" id="PS00665">
    <property type="entry name" value="DHDPS_1"/>
    <property type="match status" value="1"/>
</dbReference>
<dbReference type="PROSITE" id="PS00666">
    <property type="entry name" value="DHDPS_2"/>
    <property type="match status" value="1"/>
</dbReference>
<feature type="chain" id="PRO_1000085736" description="N-acetylneuraminate lyase">
    <location>
        <begin position="1"/>
        <end position="297"/>
    </location>
</feature>
<feature type="active site" description="Proton donor" evidence="1">
    <location>
        <position position="137"/>
    </location>
</feature>
<feature type="active site" description="Schiff-base intermediate with substrate" evidence="1">
    <location>
        <position position="165"/>
    </location>
</feature>
<feature type="binding site" evidence="1">
    <location>
        <position position="47"/>
    </location>
    <ligand>
        <name>aceneuramate</name>
        <dbReference type="ChEBI" id="CHEBI:173083"/>
    </ligand>
</feature>
<feature type="binding site" evidence="1">
    <location>
        <position position="48"/>
    </location>
    <ligand>
        <name>aceneuramate</name>
        <dbReference type="ChEBI" id="CHEBI:173083"/>
    </ligand>
</feature>
<feature type="binding site" evidence="1">
    <location>
        <position position="167"/>
    </location>
    <ligand>
        <name>aceneuramate</name>
        <dbReference type="ChEBI" id="CHEBI:173083"/>
    </ligand>
</feature>
<feature type="binding site" evidence="1">
    <location>
        <position position="189"/>
    </location>
    <ligand>
        <name>aceneuramate</name>
        <dbReference type="ChEBI" id="CHEBI:173083"/>
    </ligand>
</feature>
<feature type="binding site" evidence="1">
    <location>
        <position position="191"/>
    </location>
    <ligand>
        <name>aceneuramate</name>
        <dbReference type="ChEBI" id="CHEBI:173083"/>
    </ligand>
</feature>
<feature type="binding site" evidence="1">
    <location>
        <position position="192"/>
    </location>
    <ligand>
        <name>aceneuramate</name>
        <dbReference type="ChEBI" id="CHEBI:173083"/>
    </ligand>
</feature>
<feature type="binding site" evidence="1">
    <location>
        <position position="208"/>
    </location>
    <ligand>
        <name>aceneuramate</name>
        <dbReference type="ChEBI" id="CHEBI:173083"/>
    </ligand>
</feature>